<gene>
    <name evidence="1" type="primary">pheS</name>
    <name type="ordered locus">Pcar_1422</name>
</gene>
<sequence length="338" mass="38364">MRDKLVAMLELGRKAFESADSAVELQEIRVRFLGKKGELTAIMKGMGQLTPEQRPVVGALANQVKSELEELFEERSRIVGQQEMDKRLKQERVDVTLPGRRNSCGTKHPVTLVIEEITDIFSALGFSVAEGPEIEQDFYNFEALNMPKDHPARDMQDTFYINEDVVLRTHTSPVQIRTMLKHAPPVRVIAPGTVYRRDSDITHTPMFHQVEGFLVDRNITFGDLKGILTSFLSQIFGKGLNVRFRPSFFPFTEPSAEVDIQCVMCKGKGCRVCKNSGWLEILGSGMIDPEVFKSVDYDSETYSGFAFGMGVERIAMLKYGVNDLRLFFENDVRFLRQF</sequence>
<proteinExistence type="inferred from homology"/>
<comment type="catalytic activity">
    <reaction evidence="1">
        <text>tRNA(Phe) + L-phenylalanine + ATP = L-phenylalanyl-tRNA(Phe) + AMP + diphosphate + H(+)</text>
        <dbReference type="Rhea" id="RHEA:19413"/>
        <dbReference type="Rhea" id="RHEA-COMP:9668"/>
        <dbReference type="Rhea" id="RHEA-COMP:9699"/>
        <dbReference type="ChEBI" id="CHEBI:15378"/>
        <dbReference type="ChEBI" id="CHEBI:30616"/>
        <dbReference type="ChEBI" id="CHEBI:33019"/>
        <dbReference type="ChEBI" id="CHEBI:58095"/>
        <dbReference type="ChEBI" id="CHEBI:78442"/>
        <dbReference type="ChEBI" id="CHEBI:78531"/>
        <dbReference type="ChEBI" id="CHEBI:456215"/>
        <dbReference type="EC" id="6.1.1.20"/>
    </reaction>
</comment>
<comment type="cofactor">
    <cofactor evidence="1">
        <name>Mg(2+)</name>
        <dbReference type="ChEBI" id="CHEBI:18420"/>
    </cofactor>
    <text evidence="1">Binds 2 magnesium ions per tetramer.</text>
</comment>
<comment type="subunit">
    <text evidence="1">Tetramer of two alpha and two beta subunits.</text>
</comment>
<comment type="subcellular location">
    <subcellularLocation>
        <location evidence="1">Cytoplasm</location>
    </subcellularLocation>
</comment>
<comment type="similarity">
    <text evidence="1">Belongs to the class-II aminoacyl-tRNA synthetase family. Phe-tRNA synthetase alpha subunit type 1 subfamily.</text>
</comment>
<protein>
    <recommendedName>
        <fullName evidence="1">Phenylalanine--tRNA ligase alpha subunit</fullName>
        <ecNumber evidence="1">6.1.1.20</ecNumber>
    </recommendedName>
    <alternativeName>
        <fullName evidence="1">Phenylalanyl-tRNA synthetase alpha subunit</fullName>
        <shortName evidence="1">PheRS</shortName>
    </alternativeName>
</protein>
<dbReference type="EC" id="6.1.1.20" evidence="1"/>
<dbReference type="EMBL" id="CP000142">
    <property type="protein sequence ID" value="ABA88668.1"/>
    <property type="molecule type" value="Genomic_DNA"/>
</dbReference>
<dbReference type="RefSeq" id="WP_011341151.1">
    <property type="nucleotide sequence ID" value="NC_007498.2"/>
</dbReference>
<dbReference type="SMR" id="Q3A4N9"/>
<dbReference type="STRING" id="338963.Pcar_1422"/>
<dbReference type="KEGG" id="pca:Pcar_1422"/>
<dbReference type="eggNOG" id="COG0016">
    <property type="taxonomic scope" value="Bacteria"/>
</dbReference>
<dbReference type="HOGENOM" id="CLU_025086_0_1_7"/>
<dbReference type="OrthoDB" id="9800719at2"/>
<dbReference type="Proteomes" id="UP000002534">
    <property type="component" value="Chromosome"/>
</dbReference>
<dbReference type="GO" id="GO:0005737">
    <property type="term" value="C:cytoplasm"/>
    <property type="evidence" value="ECO:0007669"/>
    <property type="project" value="UniProtKB-SubCell"/>
</dbReference>
<dbReference type="GO" id="GO:0005524">
    <property type="term" value="F:ATP binding"/>
    <property type="evidence" value="ECO:0007669"/>
    <property type="project" value="UniProtKB-UniRule"/>
</dbReference>
<dbReference type="GO" id="GO:0000287">
    <property type="term" value="F:magnesium ion binding"/>
    <property type="evidence" value="ECO:0007669"/>
    <property type="project" value="UniProtKB-UniRule"/>
</dbReference>
<dbReference type="GO" id="GO:0004826">
    <property type="term" value="F:phenylalanine-tRNA ligase activity"/>
    <property type="evidence" value="ECO:0007669"/>
    <property type="project" value="UniProtKB-UniRule"/>
</dbReference>
<dbReference type="GO" id="GO:0000049">
    <property type="term" value="F:tRNA binding"/>
    <property type="evidence" value="ECO:0007669"/>
    <property type="project" value="InterPro"/>
</dbReference>
<dbReference type="GO" id="GO:0006432">
    <property type="term" value="P:phenylalanyl-tRNA aminoacylation"/>
    <property type="evidence" value="ECO:0007669"/>
    <property type="project" value="UniProtKB-UniRule"/>
</dbReference>
<dbReference type="CDD" id="cd00496">
    <property type="entry name" value="PheRS_alpha_core"/>
    <property type="match status" value="1"/>
</dbReference>
<dbReference type="FunFam" id="3.30.930.10:FF:000003">
    <property type="entry name" value="Phenylalanine--tRNA ligase alpha subunit"/>
    <property type="match status" value="1"/>
</dbReference>
<dbReference type="Gene3D" id="3.30.930.10">
    <property type="entry name" value="Bira Bifunctional Protein, Domain 2"/>
    <property type="match status" value="1"/>
</dbReference>
<dbReference type="HAMAP" id="MF_00281">
    <property type="entry name" value="Phe_tRNA_synth_alpha1"/>
    <property type="match status" value="1"/>
</dbReference>
<dbReference type="InterPro" id="IPR006195">
    <property type="entry name" value="aa-tRNA-synth_II"/>
</dbReference>
<dbReference type="InterPro" id="IPR045864">
    <property type="entry name" value="aa-tRNA-synth_II/BPL/LPL"/>
</dbReference>
<dbReference type="InterPro" id="IPR004529">
    <property type="entry name" value="Phe-tRNA-synth_IIc_asu"/>
</dbReference>
<dbReference type="InterPro" id="IPR004188">
    <property type="entry name" value="Phe-tRNA_ligase_II_N"/>
</dbReference>
<dbReference type="InterPro" id="IPR022911">
    <property type="entry name" value="Phe_tRNA_ligase_alpha1_bac"/>
</dbReference>
<dbReference type="InterPro" id="IPR002319">
    <property type="entry name" value="Phenylalanyl-tRNA_Synthase"/>
</dbReference>
<dbReference type="InterPro" id="IPR010978">
    <property type="entry name" value="tRNA-bd_arm"/>
</dbReference>
<dbReference type="NCBIfam" id="TIGR00468">
    <property type="entry name" value="pheS"/>
    <property type="match status" value="1"/>
</dbReference>
<dbReference type="PANTHER" id="PTHR11538:SF41">
    <property type="entry name" value="PHENYLALANINE--TRNA LIGASE, MITOCHONDRIAL"/>
    <property type="match status" value="1"/>
</dbReference>
<dbReference type="PANTHER" id="PTHR11538">
    <property type="entry name" value="PHENYLALANYL-TRNA SYNTHETASE"/>
    <property type="match status" value="1"/>
</dbReference>
<dbReference type="Pfam" id="PF02912">
    <property type="entry name" value="Phe_tRNA-synt_N"/>
    <property type="match status" value="1"/>
</dbReference>
<dbReference type="Pfam" id="PF01409">
    <property type="entry name" value="tRNA-synt_2d"/>
    <property type="match status" value="1"/>
</dbReference>
<dbReference type="SUPFAM" id="SSF55681">
    <property type="entry name" value="Class II aaRS and biotin synthetases"/>
    <property type="match status" value="1"/>
</dbReference>
<dbReference type="SUPFAM" id="SSF46589">
    <property type="entry name" value="tRNA-binding arm"/>
    <property type="match status" value="1"/>
</dbReference>
<dbReference type="PROSITE" id="PS50862">
    <property type="entry name" value="AA_TRNA_LIGASE_II"/>
    <property type="match status" value="1"/>
</dbReference>
<evidence type="ECO:0000255" key="1">
    <source>
        <dbReference type="HAMAP-Rule" id="MF_00281"/>
    </source>
</evidence>
<name>SYFA_SYNC1</name>
<organism>
    <name type="scientific">Syntrophotalea carbinolica (strain DSM 2380 / NBRC 103641 / GraBd1)</name>
    <name type="common">Pelobacter carbinolicus</name>
    <dbReference type="NCBI Taxonomy" id="338963"/>
    <lineage>
        <taxon>Bacteria</taxon>
        <taxon>Pseudomonadati</taxon>
        <taxon>Thermodesulfobacteriota</taxon>
        <taxon>Desulfuromonadia</taxon>
        <taxon>Desulfuromonadales</taxon>
        <taxon>Syntrophotaleaceae</taxon>
        <taxon>Syntrophotalea</taxon>
    </lineage>
</organism>
<feature type="chain" id="PRO_0000232006" description="Phenylalanine--tRNA ligase alpha subunit">
    <location>
        <begin position="1"/>
        <end position="338"/>
    </location>
</feature>
<feature type="binding site" evidence="1">
    <location>
        <position position="253"/>
    </location>
    <ligand>
        <name>Mg(2+)</name>
        <dbReference type="ChEBI" id="CHEBI:18420"/>
        <note>shared with beta subunit</note>
    </ligand>
</feature>
<accession>Q3A4N9</accession>
<reference key="1">
    <citation type="submission" date="2005-10" db="EMBL/GenBank/DDBJ databases">
        <title>Complete sequence of Pelobacter carbinolicus DSM 2380.</title>
        <authorList>
            <person name="Copeland A."/>
            <person name="Lucas S."/>
            <person name="Lapidus A."/>
            <person name="Barry K."/>
            <person name="Detter J.C."/>
            <person name="Glavina T."/>
            <person name="Hammon N."/>
            <person name="Israni S."/>
            <person name="Pitluck S."/>
            <person name="Chertkov O."/>
            <person name="Schmutz J."/>
            <person name="Larimer F."/>
            <person name="Land M."/>
            <person name="Kyrpides N."/>
            <person name="Ivanova N."/>
            <person name="Richardson P."/>
        </authorList>
    </citation>
    <scope>NUCLEOTIDE SEQUENCE [LARGE SCALE GENOMIC DNA]</scope>
    <source>
        <strain>DSM 2380 / NBRC 103641 / GraBd1</strain>
    </source>
</reference>
<keyword id="KW-0030">Aminoacyl-tRNA synthetase</keyword>
<keyword id="KW-0067">ATP-binding</keyword>
<keyword id="KW-0963">Cytoplasm</keyword>
<keyword id="KW-0436">Ligase</keyword>
<keyword id="KW-0460">Magnesium</keyword>
<keyword id="KW-0479">Metal-binding</keyword>
<keyword id="KW-0547">Nucleotide-binding</keyword>
<keyword id="KW-0648">Protein biosynthesis</keyword>
<keyword id="KW-1185">Reference proteome</keyword>